<protein>
    <recommendedName>
        <fullName>Zinc finger protein 333</fullName>
    </recommendedName>
</protein>
<dbReference type="EMBL" id="AF372702">
    <property type="protein sequence ID" value="AAM15528.1"/>
    <property type="molecule type" value="mRNA"/>
</dbReference>
<dbReference type="EMBL" id="AK291471">
    <property type="protein sequence ID" value="BAF84160.1"/>
    <property type="molecule type" value="mRNA"/>
</dbReference>
<dbReference type="EMBL" id="BC048107">
    <property type="protein sequence ID" value="AAH48107.1"/>
    <property type="molecule type" value="mRNA"/>
</dbReference>
<dbReference type="EMBL" id="BC064571">
    <property type="protein sequence ID" value="AAH64571.1"/>
    <property type="molecule type" value="mRNA"/>
</dbReference>
<dbReference type="EMBL" id="AB058709">
    <property type="protein sequence ID" value="BAB47435.1"/>
    <property type="molecule type" value="mRNA"/>
</dbReference>
<dbReference type="CCDS" id="CCDS12316.1">
    <molecule id="Q96JL9-1"/>
</dbReference>
<dbReference type="CCDS" id="CCDS74298.1">
    <molecule id="Q96JL9-3"/>
</dbReference>
<dbReference type="RefSeq" id="NP_001287841.1">
    <molecule id="Q96JL9-3"/>
    <property type="nucleotide sequence ID" value="NM_001300912.2"/>
</dbReference>
<dbReference type="RefSeq" id="NP_115809.1">
    <molecule id="Q96JL9-1"/>
    <property type="nucleotide sequence ID" value="NM_032433.4"/>
</dbReference>
<dbReference type="RefSeq" id="XP_011526664.1">
    <molecule id="Q96JL9-1"/>
    <property type="nucleotide sequence ID" value="XM_011528362.3"/>
</dbReference>
<dbReference type="RefSeq" id="XP_016882856.1">
    <property type="nucleotide sequence ID" value="XM_017027367.1"/>
</dbReference>
<dbReference type="RefSeq" id="XP_054178323.1">
    <molecule id="Q96JL9-1"/>
    <property type="nucleotide sequence ID" value="XM_054322348.1"/>
</dbReference>
<dbReference type="SMR" id="Q96JL9"/>
<dbReference type="BioGRID" id="124087">
    <property type="interactions" value="54"/>
</dbReference>
<dbReference type="FunCoup" id="Q96JL9">
    <property type="interactions" value="10"/>
</dbReference>
<dbReference type="IntAct" id="Q96JL9">
    <property type="interactions" value="30"/>
</dbReference>
<dbReference type="MINT" id="Q96JL9"/>
<dbReference type="STRING" id="9606.ENSP00000292530"/>
<dbReference type="GlyGen" id="Q96JL9">
    <property type="glycosylation" value="1 site, 1 O-linked glycan (1 site)"/>
</dbReference>
<dbReference type="iPTMnet" id="Q96JL9"/>
<dbReference type="PhosphoSitePlus" id="Q96JL9"/>
<dbReference type="BioMuta" id="ZNF333"/>
<dbReference type="DMDM" id="29840870"/>
<dbReference type="jPOST" id="Q96JL9"/>
<dbReference type="MassIVE" id="Q96JL9"/>
<dbReference type="PaxDb" id="9606-ENSP00000292530"/>
<dbReference type="PeptideAtlas" id="Q96JL9"/>
<dbReference type="ProteomicsDB" id="76980">
    <molecule id="Q96JL9-1"/>
</dbReference>
<dbReference type="Pumba" id="Q96JL9"/>
<dbReference type="Antibodypedia" id="26832">
    <property type="antibodies" value="87 antibodies from 19 providers"/>
</dbReference>
<dbReference type="DNASU" id="84449"/>
<dbReference type="Ensembl" id="ENST00000292530.11">
    <molecule id="Q96JL9-1"/>
    <property type="protein sequence ID" value="ENSP00000292530.5"/>
    <property type="gene ID" value="ENSG00000160961.12"/>
</dbReference>
<dbReference type="Ensembl" id="ENST00000540689.6">
    <molecule id="Q96JL9-3"/>
    <property type="protein sequence ID" value="ENSP00000438130.1"/>
    <property type="gene ID" value="ENSG00000160961.12"/>
</dbReference>
<dbReference type="GeneID" id="84449"/>
<dbReference type="KEGG" id="hsa:84449"/>
<dbReference type="MANE-Select" id="ENST00000292530.11">
    <property type="protein sequence ID" value="ENSP00000292530.5"/>
    <property type="RefSeq nucleotide sequence ID" value="NM_032433.4"/>
    <property type="RefSeq protein sequence ID" value="NP_115809.1"/>
</dbReference>
<dbReference type="UCSC" id="uc002mzn.4">
    <molecule id="Q96JL9-1"/>
    <property type="organism name" value="human"/>
</dbReference>
<dbReference type="AGR" id="HGNC:15624"/>
<dbReference type="CTD" id="84449"/>
<dbReference type="DisGeNET" id="84449"/>
<dbReference type="GeneCards" id="ZNF333"/>
<dbReference type="HGNC" id="HGNC:15624">
    <property type="gene designation" value="ZNF333"/>
</dbReference>
<dbReference type="HPA" id="ENSG00000160961">
    <property type="expression patterns" value="Low tissue specificity"/>
</dbReference>
<dbReference type="MIM" id="611811">
    <property type="type" value="gene"/>
</dbReference>
<dbReference type="neXtProt" id="NX_Q96JL9"/>
<dbReference type="OpenTargets" id="ENSG00000160961"/>
<dbReference type="PharmGKB" id="PA134929553"/>
<dbReference type="VEuPathDB" id="HostDB:ENSG00000160961"/>
<dbReference type="eggNOG" id="KOG1721">
    <property type="taxonomic scope" value="Eukaryota"/>
</dbReference>
<dbReference type="GeneTree" id="ENSGT00940000163161"/>
<dbReference type="HOGENOM" id="CLU_081476_0_0_1"/>
<dbReference type="InParanoid" id="Q96JL9"/>
<dbReference type="OMA" id="TQEDWPA"/>
<dbReference type="OrthoDB" id="6077919at2759"/>
<dbReference type="PAN-GO" id="Q96JL9">
    <property type="GO annotations" value="4 GO annotations based on evolutionary models"/>
</dbReference>
<dbReference type="PhylomeDB" id="Q96JL9"/>
<dbReference type="TreeFam" id="TF350814"/>
<dbReference type="PathwayCommons" id="Q96JL9"/>
<dbReference type="Reactome" id="R-HSA-212436">
    <property type="pathway name" value="Generic Transcription Pathway"/>
</dbReference>
<dbReference type="SignaLink" id="Q96JL9"/>
<dbReference type="BioGRID-ORCS" id="84449">
    <property type="hits" value="18 hits in 1178 CRISPR screens"/>
</dbReference>
<dbReference type="ChiTaRS" id="ZNF333">
    <property type="organism name" value="human"/>
</dbReference>
<dbReference type="GenomeRNAi" id="84449"/>
<dbReference type="Pharos" id="Q96JL9">
    <property type="development level" value="Tdark"/>
</dbReference>
<dbReference type="PRO" id="PR:Q96JL9"/>
<dbReference type="Proteomes" id="UP000005640">
    <property type="component" value="Chromosome 19"/>
</dbReference>
<dbReference type="RNAct" id="Q96JL9">
    <property type="molecule type" value="protein"/>
</dbReference>
<dbReference type="Bgee" id="ENSG00000160961">
    <property type="expression patterns" value="Expressed in sural nerve and 115 other cell types or tissues"/>
</dbReference>
<dbReference type="ExpressionAtlas" id="Q96JL9">
    <property type="expression patterns" value="baseline and differential"/>
</dbReference>
<dbReference type="GO" id="GO:0005634">
    <property type="term" value="C:nucleus"/>
    <property type="evidence" value="ECO:0000318"/>
    <property type="project" value="GO_Central"/>
</dbReference>
<dbReference type="GO" id="GO:0000981">
    <property type="term" value="F:DNA-binding transcription factor activity, RNA polymerase II-specific"/>
    <property type="evidence" value="ECO:0000318"/>
    <property type="project" value="GO_Central"/>
</dbReference>
<dbReference type="GO" id="GO:0000978">
    <property type="term" value="F:RNA polymerase II cis-regulatory region sequence-specific DNA binding"/>
    <property type="evidence" value="ECO:0000318"/>
    <property type="project" value="GO_Central"/>
</dbReference>
<dbReference type="GO" id="GO:0008270">
    <property type="term" value="F:zinc ion binding"/>
    <property type="evidence" value="ECO:0007669"/>
    <property type="project" value="UniProtKB-KW"/>
</dbReference>
<dbReference type="GO" id="GO:0006357">
    <property type="term" value="P:regulation of transcription by RNA polymerase II"/>
    <property type="evidence" value="ECO:0000318"/>
    <property type="project" value="GO_Central"/>
</dbReference>
<dbReference type="CDD" id="cd07765">
    <property type="entry name" value="KRAB_A-box"/>
    <property type="match status" value="2"/>
</dbReference>
<dbReference type="FunFam" id="3.30.160.60:FF:000250">
    <property type="entry name" value="zinc finger protein 197 isoform X1"/>
    <property type="match status" value="1"/>
</dbReference>
<dbReference type="FunFam" id="3.30.160.60:FF:000546">
    <property type="entry name" value="Zinc finger protein 333"/>
    <property type="match status" value="1"/>
</dbReference>
<dbReference type="FunFam" id="3.30.160.60:FF:000629">
    <property type="entry name" value="zinc finger protein 333 isoform X1"/>
    <property type="match status" value="1"/>
</dbReference>
<dbReference type="FunFam" id="3.30.160.60:FF:000970">
    <property type="entry name" value="zinc finger protein 333 isoform X2"/>
    <property type="match status" value="1"/>
</dbReference>
<dbReference type="FunFam" id="3.30.160.60:FF:001248">
    <property type="entry name" value="zinc finger protein 333 isoform X2"/>
    <property type="match status" value="1"/>
</dbReference>
<dbReference type="FunFam" id="3.30.160.60:FF:001517">
    <property type="entry name" value="zinc finger protein 333 isoform X2"/>
    <property type="match status" value="1"/>
</dbReference>
<dbReference type="FunFam" id="3.30.160.60:FF:001004">
    <property type="entry name" value="Zinc finger protein 426"/>
    <property type="match status" value="1"/>
</dbReference>
<dbReference type="FunFam" id="3.30.160.60:FF:000801">
    <property type="entry name" value="zinc finger protein 461 isoform X2"/>
    <property type="match status" value="1"/>
</dbReference>
<dbReference type="FunFam" id="3.30.160.60:FF:002254">
    <property type="entry name" value="Zinc finger protein 540"/>
    <property type="match status" value="2"/>
</dbReference>
<dbReference type="Gene3D" id="6.10.140.140">
    <property type="match status" value="2"/>
</dbReference>
<dbReference type="Gene3D" id="3.30.160.60">
    <property type="entry name" value="Classic Zinc Finger"/>
    <property type="match status" value="10"/>
</dbReference>
<dbReference type="InterPro" id="IPR001909">
    <property type="entry name" value="KRAB"/>
</dbReference>
<dbReference type="InterPro" id="IPR036051">
    <property type="entry name" value="KRAB_dom_sf"/>
</dbReference>
<dbReference type="InterPro" id="IPR050758">
    <property type="entry name" value="Znf_C2H2-type"/>
</dbReference>
<dbReference type="InterPro" id="IPR036236">
    <property type="entry name" value="Znf_C2H2_sf"/>
</dbReference>
<dbReference type="InterPro" id="IPR013087">
    <property type="entry name" value="Znf_C2H2_type"/>
</dbReference>
<dbReference type="PANTHER" id="PTHR23234:SF10">
    <property type="entry name" value="RIKEN CDNA 6720489N17 GENE-RELATED"/>
    <property type="match status" value="1"/>
</dbReference>
<dbReference type="PANTHER" id="PTHR23234">
    <property type="entry name" value="ZNF44 PROTEIN"/>
    <property type="match status" value="1"/>
</dbReference>
<dbReference type="Pfam" id="PF01352">
    <property type="entry name" value="KRAB"/>
    <property type="match status" value="2"/>
</dbReference>
<dbReference type="Pfam" id="PF00096">
    <property type="entry name" value="zf-C2H2"/>
    <property type="match status" value="8"/>
</dbReference>
<dbReference type="Pfam" id="PF13465">
    <property type="entry name" value="zf-H2C2_2"/>
    <property type="match status" value="1"/>
</dbReference>
<dbReference type="SMART" id="SM00349">
    <property type="entry name" value="KRAB"/>
    <property type="match status" value="2"/>
</dbReference>
<dbReference type="SMART" id="SM00614">
    <property type="entry name" value="ZnF_BED"/>
    <property type="match status" value="2"/>
</dbReference>
<dbReference type="SMART" id="SM00355">
    <property type="entry name" value="ZnF_C2H2"/>
    <property type="match status" value="10"/>
</dbReference>
<dbReference type="SUPFAM" id="SSF57667">
    <property type="entry name" value="beta-beta-alpha zinc fingers"/>
    <property type="match status" value="7"/>
</dbReference>
<dbReference type="SUPFAM" id="SSF109640">
    <property type="entry name" value="KRAB domain (Kruppel-associated box)"/>
    <property type="match status" value="2"/>
</dbReference>
<dbReference type="PROSITE" id="PS50805">
    <property type="entry name" value="KRAB"/>
    <property type="match status" value="2"/>
</dbReference>
<dbReference type="PROSITE" id="PS00028">
    <property type="entry name" value="ZINC_FINGER_C2H2_1"/>
    <property type="match status" value="10"/>
</dbReference>
<dbReference type="PROSITE" id="PS50157">
    <property type="entry name" value="ZINC_FINGER_C2H2_2"/>
    <property type="match status" value="10"/>
</dbReference>
<proteinExistence type="evidence at protein level"/>
<keyword id="KW-0025">Alternative splicing</keyword>
<keyword id="KW-0238">DNA-binding</keyword>
<keyword id="KW-0479">Metal-binding</keyword>
<keyword id="KW-0539">Nucleus</keyword>
<keyword id="KW-1267">Proteomics identification</keyword>
<keyword id="KW-1185">Reference proteome</keyword>
<keyword id="KW-0677">Repeat</keyword>
<keyword id="KW-0804">Transcription</keyword>
<keyword id="KW-0805">Transcription regulation</keyword>
<keyword id="KW-0862">Zinc</keyword>
<keyword id="KW-0863">Zinc-finger</keyword>
<evidence type="ECO:0000255" key="1">
    <source>
        <dbReference type="PROSITE-ProRule" id="PRU00042"/>
    </source>
</evidence>
<evidence type="ECO:0000255" key="2">
    <source>
        <dbReference type="PROSITE-ProRule" id="PRU00119"/>
    </source>
</evidence>
<evidence type="ECO:0000303" key="3">
    <source>
    </source>
</evidence>
<evidence type="ECO:0000303" key="4">
    <source>
    </source>
</evidence>
<evidence type="ECO:0000305" key="5"/>
<accession>Q96JL9</accession>
<accession>Q6P2E6</accession>
<accession>Q86WS6</accession>
<accession>Q8TDL0</accession>
<comment type="function">
    <text>May be involved in transcriptional regulation.</text>
</comment>
<comment type="interaction">
    <interactant intactId="EBI-8489497">
        <id>Q96JL9</id>
    </interactant>
    <interactant intactId="EBI-78139">
        <id>Q13263</id>
        <label>TRIM28</label>
    </interactant>
    <organismsDiffer>false</organismsDiffer>
    <experiments>4</experiments>
</comment>
<comment type="interaction">
    <interactant intactId="EBI-25835852">
        <id>Q96JL9-2</id>
    </interactant>
    <interactant intactId="EBI-718729">
        <id>P55212</id>
        <label>CASP6</label>
    </interactant>
    <organismsDiffer>false</organismsDiffer>
    <experiments>3</experiments>
</comment>
<comment type="interaction">
    <interactant intactId="EBI-25835852">
        <id>Q96JL9-2</id>
    </interactant>
    <interactant intactId="EBI-6624398">
        <id>P06307</id>
        <label>CCK</label>
    </interactant>
    <organismsDiffer>false</organismsDiffer>
    <experiments>3</experiments>
</comment>
<comment type="interaction">
    <interactant intactId="EBI-25835852">
        <id>Q96JL9-2</id>
    </interactant>
    <interactant intactId="EBI-395638">
        <id>O14645</id>
        <label>DNALI1</label>
    </interactant>
    <organismsDiffer>false</organismsDiffer>
    <experiments>3</experiments>
</comment>
<comment type="interaction">
    <interactant intactId="EBI-25835852">
        <id>Q96JL9-2</id>
    </interactant>
    <interactant intactId="EBI-348399">
        <id>P22607</id>
        <label>FGFR3</label>
    </interactant>
    <organismsDiffer>false</organismsDiffer>
    <experiments>3</experiments>
</comment>
<comment type="interaction">
    <interactant intactId="EBI-25835852">
        <id>Q96JL9-2</id>
    </interactant>
    <interactant intactId="EBI-8285963">
        <id>Q14957</id>
        <label>GRIN2C</label>
    </interactant>
    <organismsDiffer>false</organismsDiffer>
    <experiments>3</experiments>
</comment>
<comment type="interaction">
    <interactant intactId="EBI-25835852">
        <id>Q96JL9-2</id>
    </interactant>
    <interactant intactId="EBI-351506">
        <id>P06396</id>
        <label>GSN</label>
    </interactant>
    <organismsDiffer>false</organismsDiffer>
    <experiments>3</experiments>
</comment>
<comment type="interaction">
    <interactant intactId="EBI-25835852">
        <id>Q96JL9-2</id>
    </interactant>
    <interactant intactId="EBI-948266">
        <id>O14901</id>
        <label>KLF11</label>
    </interactant>
    <organismsDiffer>false</organismsDiffer>
    <experiments>3</experiments>
</comment>
<comment type="interaction">
    <interactant intactId="EBI-25835852">
        <id>Q96JL9-2</id>
    </interactant>
    <interactant intactId="EBI-21591415">
        <id>P13473-2</id>
        <label>LAMP2</label>
    </interactant>
    <organismsDiffer>false</organismsDiffer>
    <experiments>3</experiments>
</comment>
<comment type="interaction">
    <interactant intactId="EBI-25835852">
        <id>Q96JL9-2</id>
    </interactant>
    <interactant intactId="EBI-741480">
        <id>Q9UMX0</id>
        <label>UBQLN1</label>
    </interactant>
    <organismsDiffer>false</organismsDiffer>
    <experiments>3</experiments>
</comment>
<comment type="subcellular location">
    <subcellularLocation>
        <location evidence="5">Nucleus</location>
    </subcellularLocation>
</comment>
<comment type="alternative products">
    <event type="alternative splicing"/>
    <isoform>
        <id>Q96JL9-1</id>
        <name>1</name>
        <sequence type="displayed"/>
    </isoform>
    <isoform>
        <id>Q96JL9-2</id>
        <name>2</name>
        <sequence type="described" ref="VSP_055945 VSP_055946"/>
    </isoform>
    <isoform>
        <id>Q96JL9-3</id>
        <name>3</name>
        <sequence type="described" ref="VSP_055947 VSP_055948"/>
    </isoform>
</comment>
<comment type="tissue specificity">
    <text>Highly expressed in heart.</text>
</comment>
<comment type="similarity">
    <text evidence="5">Belongs to the krueppel C2H2-type zinc-finger protein family.</text>
</comment>
<name>ZN333_HUMAN</name>
<gene>
    <name type="primary">ZNF333</name>
    <name type="synonym">KIAA1806</name>
</gene>
<sequence>MESVTFEDVAVEFIQEWALLDSARRSLCKYRMLDQCRTLASRGTPPCKPSCVSQLGQRAEPKATERGILRATGVAWESQLKPEELPSMQDLLEEASSRDMQMGPGLFLRMQLVPSIEERETPLTREDRPALQEPPWSLGCTGLKAAMQIQRVVIPVPTLGHRNPWVARDSAVPARDPAWLQEDKVEEEAMAPGLPTACSQEPVTFADVAVVFTPEEWVFLDSTQRSLYRDVMLENYRNLASVADQLCKPNALSYLEERGEQWTTDRGVLSDTCAEPQCQPQEAIPSQDTFTEILSIDVKGEQPQPGEKLYKYNELEKPFNSIEPLFQYQRIHAGEASCECQEIRNSFFQSAHLIVPEKIRSGDKSYACNKCEKSFRYSSDLIRHEKTHTAEKCFDCQECGQAFKYSSNLRRHMRTHTGEKPFECSQCGKTFTRNFNLILHQRNHTGEKPYECKDCGKAFNQPSSLRSHVRTHTGEKPFECSQCGKAFREHSSLKTHLRTHTREKPYECNQCGKPFRTSTHLNVHKRIHTGEKLYECATCGQVLSRLSTLKSHMRTHTGEKPYVCQECGRAFSEPSSLRKHARTHSGKKPYACQECGRAFGQSSHLIVHVRTHSAGRPYQCNQCEKAFRHSSSLTVHKRTHVGRETIRNGSLPLSMSHPYCGPLAN</sequence>
<feature type="chain" id="PRO_0000047536" description="Zinc finger protein 333">
    <location>
        <begin position="1"/>
        <end position="665"/>
    </location>
</feature>
<feature type="domain" description="KRAB 1" evidence="2">
    <location>
        <begin position="4"/>
        <end position="74"/>
    </location>
</feature>
<feature type="domain" description="KRAB 2" evidence="2">
    <location>
        <begin position="203"/>
        <end position="274"/>
    </location>
</feature>
<feature type="zinc finger region" description="C2H2-type 1" evidence="1">
    <location>
        <begin position="366"/>
        <end position="388"/>
    </location>
</feature>
<feature type="zinc finger region" description="C2H2-type 2" evidence="1">
    <location>
        <begin position="394"/>
        <end position="416"/>
    </location>
</feature>
<feature type="zinc finger region" description="C2H2-type 3" evidence="1">
    <location>
        <begin position="422"/>
        <end position="444"/>
    </location>
</feature>
<feature type="zinc finger region" description="C2H2-type 4" evidence="1">
    <location>
        <begin position="450"/>
        <end position="472"/>
    </location>
</feature>
<feature type="zinc finger region" description="C2H2-type 5" evidence="1">
    <location>
        <begin position="478"/>
        <end position="500"/>
    </location>
</feature>
<feature type="zinc finger region" description="C2H2-type 6" evidence="1">
    <location>
        <begin position="506"/>
        <end position="528"/>
    </location>
</feature>
<feature type="zinc finger region" description="C2H2-type 7" evidence="1">
    <location>
        <begin position="534"/>
        <end position="556"/>
    </location>
</feature>
<feature type="zinc finger region" description="C2H2-type 8" evidence="1">
    <location>
        <begin position="562"/>
        <end position="584"/>
    </location>
</feature>
<feature type="zinc finger region" description="C2H2-type 9" evidence="1">
    <location>
        <begin position="590"/>
        <end position="612"/>
    </location>
</feature>
<feature type="zinc finger region" description="C2H2-type 10" evidence="1">
    <location>
        <begin position="618"/>
        <end position="640"/>
    </location>
</feature>
<feature type="splice variant" id="VSP_055945" description="In isoform 2." evidence="3 4">
    <original>GLKAAMQIQRVVIPVPTLGHRNPWVARDSAVPARDPAWLQE</original>
    <variation>LPLLSLLLPSCPEPPLVLLDSSSAPDRHLGSTLDTEARGIP</variation>
    <location>
        <begin position="142"/>
        <end position="182"/>
    </location>
</feature>
<feature type="splice variant" id="VSP_055946" description="In isoform 2." evidence="3 4">
    <location>
        <begin position="183"/>
        <end position="665"/>
    </location>
</feature>
<feature type="splice variant" id="VSP_055947" description="In isoform 3." evidence="4">
    <original>EQ</original>
    <variation>PPN</variation>
    <location>
        <begin position="301"/>
        <end position="302"/>
    </location>
</feature>
<feature type="splice variant" id="VSP_055948" description="In isoform 3." evidence="4">
    <location>
        <begin position="303"/>
        <end position="665"/>
    </location>
</feature>
<feature type="sequence variant" id="VAR_024210" description="In dbSNP:rs3885179.">
    <original>A</original>
    <variation>E</variation>
    <location>
        <position position="251"/>
    </location>
</feature>
<feature type="sequence variant" id="VAR_052812" description="In dbSNP:rs3764626.">
    <original>A</original>
    <variation>V</variation>
    <location>
        <position position="537"/>
    </location>
</feature>
<feature type="sequence conflict" description="In Ref. 3; AAH48107." evidence="5" ref="3">
    <original>S</original>
    <variation>P</variation>
    <location>
        <position position="115"/>
    </location>
</feature>
<reference key="1">
    <citation type="journal article" date="2002" name="Biochim. Biophys. Acta">
        <title>Characterization of ZNF333, a novel double KRAB domain containing zinc finger gene on human chromosome 19p13.1.</title>
        <authorList>
            <person name="Tian Y."/>
            <person name="Breedveld G.J."/>
            <person name="Huang S."/>
            <person name="Oostra B.A."/>
            <person name="Heutink P."/>
            <person name="Lo W.H.Y."/>
        </authorList>
    </citation>
    <scope>NUCLEOTIDE SEQUENCE [MRNA] (ISOFORM 1)</scope>
</reference>
<reference key="2">
    <citation type="journal article" date="2004" name="Nat. Genet.">
        <title>Complete sequencing and characterization of 21,243 full-length human cDNAs.</title>
        <authorList>
            <person name="Ota T."/>
            <person name="Suzuki Y."/>
            <person name="Nishikawa T."/>
            <person name="Otsuki T."/>
            <person name="Sugiyama T."/>
            <person name="Irie R."/>
            <person name="Wakamatsu A."/>
            <person name="Hayashi K."/>
            <person name="Sato H."/>
            <person name="Nagai K."/>
            <person name="Kimura K."/>
            <person name="Makita H."/>
            <person name="Sekine M."/>
            <person name="Obayashi M."/>
            <person name="Nishi T."/>
            <person name="Shibahara T."/>
            <person name="Tanaka T."/>
            <person name="Ishii S."/>
            <person name="Yamamoto J."/>
            <person name="Saito K."/>
            <person name="Kawai Y."/>
            <person name="Isono Y."/>
            <person name="Nakamura Y."/>
            <person name="Nagahari K."/>
            <person name="Murakami K."/>
            <person name="Yasuda T."/>
            <person name="Iwayanagi T."/>
            <person name="Wagatsuma M."/>
            <person name="Shiratori A."/>
            <person name="Sudo H."/>
            <person name="Hosoiri T."/>
            <person name="Kaku Y."/>
            <person name="Kodaira H."/>
            <person name="Kondo H."/>
            <person name="Sugawara M."/>
            <person name="Takahashi M."/>
            <person name="Kanda K."/>
            <person name="Yokoi T."/>
            <person name="Furuya T."/>
            <person name="Kikkawa E."/>
            <person name="Omura Y."/>
            <person name="Abe K."/>
            <person name="Kamihara K."/>
            <person name="Katsuta N."/>
            <person name="Sato K."/>
            <person name="Tanikawa M."/>
            <person name="Yamazaki M."/>
            <person name="Ninomiya K."/>
            <person name="Ishibashi T."/>
            <person name="Yamashita H."/>
            <person name="Murakawa K."/>
            <person name="Fujimori K."/>
            <person name="Tanai H."/>
            <person name="Kimata M."/>
            <person name="Watanabe M."/>
            <person name="Hiraoka S."/>
            <person name="Chiba Y."/>
            <person name="Ishida S."/>
            <person name="Ono Y."/>
            <person name="Takiguchi S."/>
            <person name="Watanabe S."/>
            <person name="Yosida M."/>
            <person name="Hotuta T."/>
            <person name="Kusano J."/>
            <person name="Kanehori K."/>
            <person name="Takahashi-Fujii A."/>
            <person name="Hara H."/>
            <person name="Tanase T.-O."/>
            <person name="Nomura Y."/>
            <person name="Togiya S."/>
            <person name="Komai F."/>
            <person name="Hara R."/>
            <person name="Takeuchi K."/>
            <person name="Arita M."/>
            <person name="Imose N."/>
            <person name="Musashino K."/>
            <person name="Yuuki H."/>
            <person name="Oshima A."/>
            <person name="Sasaki N."/>
            <person name="Aotsuka S."/>
            <person name="Yoshikawa Y."/>
            <person name="Matsunawa H."/>
            <person name="Ichihara T."/>
            <person name="Shiohata N."/>
            <person name="Sano S."/>
            <person name="Moriya S."/>
            <person name="Momiyama H."/>
            <person name="Satoh N."/>
            <person name="Takami S."/>
            <person name="Terashima Y."/>
            <person name="Suzuki O."/>
            <person name="Nakagawa S."/>
            <person name="Senoh A."/>
            <person name="Mizoguchi H."/>
            <person name="Goto Y."/>
            <person name="Shimizu F."/>
            <person name="Wakebe H."/>
            <person name="Hishigaki H."/>
            <person name="Watanabe T."/>
            <person name="Sugiyama A."/>
            <person name="Takemoto M."/>
            <person name="Kawakami B."/>
            <person name="Yamazaki M."/>
            <person name="Watanabe K."/>
            <person name="Kumagai A."/>
            <person name="Itakura S."/>
            <person name="Fukuzumi Y."/>
            <person name="Fujimori Y."/>
            <person name="Komiyama M."/>
            <person name="Tashiro H."/>
            <person name="Tanigami A."/>
            <person name="Fujiwara T."/>
            <person name="Ono T."/>
            <person name="Yamada K."/>
            <person name="Fujii Y."/>
            <person name="Ozaki K."/>
            <person name="Hirao M."/>
            <person name="Ohmori Y."/>
            <person name="Kawabata A."/>
            <person name="Hikiji T."/>
            <person name="Kobatake N."/>
            <person name="Inagaki H."/>
            <person name="Ikema Y."/>
            <person name="Okamoto S."/>
            <person name="Okitani R."/>
            <person name="Kawakami T."/>
            <person name="Noguchi S."/>
            <person name="Itoh T."/>
            <person name="Shigeta K."/>
            <person name="Senba T."/>
            <person name="Matsumura K."/>
            <person name="Nakajima Y."/>
            <person name="Mizuno T."/>
            <person name="Morinaga M."/>
            <person name="Sasaki M."/>
            <person name="Togashi T."/>
            <person name="Oyama M."/>
            <person name="Hata H."/>
            <person name="Watanabe M."/>
            <person name="Komatsu T."/>
            <person name="Mizushima-Sugano J."/>
            <person name="Satoh T."/>
            <person name="Shirai Y."/>
            <person name="Takahashi Y."/>
            <person name="Nakagawa K."/>
            <person name="Okumura K."/>
            <person name="Nagase T."/>
            <person name="Nomura N."/>
            <person name="Kikuchi H."/>
            <person name="Masuho Y."/>
            <person name="Yamashita R."/>
            <person name="Nakai K."/>
            <person name="Yada T."/>
            <person name="Nakamura Y."/>
            <person name="Ohara O."/>
            <person name="Isogai T."/>
            <person name="Sugano S."/>
        </authorList>
    </citation>
    <scope>NUCLEOTIDE SEQUENCE [LARGE SCALE MRNA] (ISOFORM 2)</scope>
    <source>
        <tissue>Brain</tissue>
    </source>
</reference>
<reference key="3">
    <citation type="journal article" date="2004" name="Genome Res.">
        <title>The status, quality, and expansion of the NIH full-length cDNA project: the Mammalian Gene Collection (MGC).</title>
        <authorList>
            <consortium name="The MGC Project Team"/>
        </authorList>
    </citation>
    <scope>NUCLEOTIDE SEQUENCE [LARGE SCALE MRNA] (ISOFORMS 2 AND 3)</scope>
    <source>
        <tissue>Ovary</tissue>
        <tissue>Testis</tissue>
    </source>
</reference>
<reference key="4">
    <citation type="journal article" date="2001" name="DNA Res.">
        <title>Prediction of the coding sequences of unidentified human genes. XX. The complete sequences of 100 new cDNA clones from brain which code for large proteins in vitro.</title>
        <authorList>
            <person name="Nagase T."/>
            <person name="Nakayama M."/>
            <person name="Nakajima D."/>
            <person name="Kikuno R."/>
            <person name="Ohara O."/>
        </authorList>
    </citation>
    <scope>NUCLEOTIDE SEQUENCE [LARGE SCALE MRNA] OF 185-665 (ISOFORM 1)</scope>
    <source>
        <tissue>Brain</tissue>
    </source>
</reference>
<organism>
    <name type="scientific">Homo sapiens</name>
    <name type="common">Human</name>
    <dbReference type="NCBI Taxonomy" id="9606"/>
    <lineage>
        <taxon>Eukaryota</taxon>
        <taxon>Metazoa</taxon>
        <taxon>Chordata</taxon>
        <taxon>Craniata</taxon>
        <taxon>Vertebrata</taxon>
        <taxon>Euteleostomi</taxon>
        <taxon>Mammalia</taxon>
        <taxon>Eutheria</taxon>
        <taxon>Euarchontoglires</taxon>
        <taxon>Primates</taxon>
        <taxon>Haplorrhini</taxon>
        <taxon>Catarrhini</taxon>
        <taxon>Hominidae</taxon>
        <taxon>Homo</taxon>
    </lineage>
</organism>